<evidence type="ECO:0000250" key="1"/>
<evidence type="ECO:0000255" key="2"/>
<evidence type="ECO:0000255" key="3">
    <source>
        <dbReference type="PROSITE-ProRule" id="PRU00273"/>
    </source>
</evidence>
<evidence type="ECO:0000305" key="4"/>
<organism>
    <name type="scientific">Thermococcus hydrothermalis</name>
    <dbReference type="NCBI Taxonomy" id="46539"/>
    <lineage>
        <taxon>Archaea</taxon>
        <taxon>Methanobacteriati</taxon>
        <taxon>Methanobacteriota</taxon>
        <taxon>Thermococci</taxon>
        <taxon>Thermococcales</taxon>
        <taxon>Thermococcaceae</taxon>
        <taxon>Thermococcus</taxon>
    </lineage>
</organism>
<protein>
    <recommendedName>
        <fullName>DNA polymerase</fullName>
        <ecNumber>2.7.7.7</ecNumber>
    </recommendedName>
    <component>
        <recommendedName>
            <fullName>Endonuclease PI-ThyII</fullName>
            <ecNumber>3.1.-.-</ecNumber>
        </recommendedName>
        <alternativeName>
            <fullName>Thy pol-1 intein</fullName>
        </alternativeName>
    </component>
    <component>
        <recommendedName>
            <fullName>Endonuclease PI-ThyI</fullName>
            <ecNumber>3.1.-.-</ecNumber>
        </recommendedName>
        <alternativeName>
            <fullName>Thy pol-2 intein</fullName>
        </alternativeName>
    </component>
</protein>
<keyword id="KW-0068">Autocatalytic cleavage</keyword>
<keyword id="KW-0235">DNA replication</keyword>
<keyword id="KW-0238">DNA-binding</keyword>
<keyword id="KW-0239">DNA-directed DNA polymerase</keyword>
<keyword id="KW-0255">Endonuclease</keyword>
<keyword id="KW-0269">Exonuclease</keyword>
<keyword id="KW-0378">Hydrolase</keyword>
<keyword id="KW-0404">Intron homing</keyword>
<keyword id="KW-0511">Multifunctional enzyme</keyword>
<keyword id="KW-0540">Nuclease</keyword>
<keyword id="KW-0548">Nucleotidyltransferase</keyword>
<keyword id="KW-0651">Protein splicing</keyword>
<keyword id="KW-0677">Repeat</keyword>
<keyword id="KW-0808">Transferase</keyword>
<dbReference type="EC" id="2.7.7.7"/>
<dbReference type="EC" id="3.1.-.-"/>
<dbReference type="EMBL" id="AJ245819">
    <property type="protein sequence ID" value="CAC18555.1"/>
    <property type="molecule type" value="Genomic_DNA"/>
</dbReference>
<dbReference type="SMR" id="Q9HH05"/>
<dbReference type="GO" id="GO:0003677">
    <property type="term" value="F:DNA binding"/>
    <property type="evidence" value="ECO:0007669"/>
    <property type="project" value="UniProtKB-KW"/>
</dbReference>
<dbReference type="GO" id="GO:0003887">
    <property type="term" value="F:DNA-directed DNA polymerase activity"/>
    <property type="evidence" value="ECO:0007669"/>
    <property type="project" value="UniProtKB-KW"/>
</dbReference>
<dbReference type="GO" id="GO:0004519">
    <property type="term" value="F:endonuclease activity"/>
    <property type="evidence" value="ECO:0007669"/>
    <property type="project" value="UniProtKB-KW"/>
</dbReference>
<dbReference type="GO" id="GO:0004527">
    <property type="term" value="F:exonuclease activity"/>
    <property type="evidence" value="ECO:0007669"/>
    <property type="project" value="UniProtKB-KW"/>
</dbReference>
<dbReference type="GO" id="GO:0000166">
    <property type="term" value="F:nucleotide binding"/>
    <property type="evidence" value="ECO:0007669"/>
    <property type="project" value="InterPro"/>
</dbReference>
<dbReference type="GO" id="GO:0006261">
    <property type="term" value="P:DNA-templated DNA replication"/>
    <property type="evidence" value="ECO:0007669"/>
    <property type="project" value="TreeGrafter"/>
</dbReference>
<dbReference type="GO" id="GO:0016539">
    <property type="term" value="P:intein-mediated protein splicing"/>
    <property type="evidence" value="ECO:0007669"/>
    <property type="project" value="InterPro"/>
</dbReference>
<dbReference type="GO" id="GO:0006314">
    <property type="term" value="P:intron homing"/>
    <property type="evidence" value="ECO:0007669"/>
    <property type="project" value="UniProtKB-KW"/>
</dbReference>
<dbReference type="CDD" id="cd05780">
    <property type="entry name" value="DNA_polB_Kod1_like_exo"/>
    <property type="match status" value="1"/>
</dbReference>
<dbReference type="CDD" id="cd00081">
    <property type="entry name" value="Hint"/>
    <property type="match status" value="4"/>
</dbReference>
<dbReference type="FunFam" id="1.10.132.60:FF:000013">
    <property type="entry name" value="DNA polymerase Pol2"/>
    <property type="match status" value="1"/>
</dbReference>
<dbReference type="Gene3D" id="1.10.132.60">
    <property type="entry name" value="DNA polymerase family B, C-terminal domain"/>
    <property type="match status" value="1"/>
</dbReference>
<dbReference type="Gene3D" id="3.30.342.10">
    <property type="entry name" value="DNA Polymerase, chain B, domain 1"/>
    <property type="match status" value="1"/>
</dbReference>
<dbReference type="Gene3D" id="2.170.16.10">
    <property type="entry name" value="Hedgehog/Intein (Hint) domain"/>
    <property type="match status" value="3"/>
</dbReference>
<dbReference type="Gene3D" id="1.10.287.690">
    <property type="entry name" value="Helix hairpin bin"/>
    <property type="match status" value="1"/>
</dbReference>
<dbReference type="Gene3D" id="3.10.28.10">
    <property type="entry name" value="Homing endonucleases"/>
    <property type="match status" value="2"/>
</dbReference>
<dbReference type="Gene3D" id="1.10.8.1330">
    <property type="entry name" value="Intein homing endonuclease, domain III"/>
    <property type="match status" value="1"/>
</dbReference>
<dbReference type="Gene3D" id="1.10.10.1010">
    <property type="entry name" value="Intein homing endonuclease, domain IV"/>
    <property type="match status" value="1"/>
</dbReference>
<dbReference type="Gene3D" id="3.90.1600.10">
    <property type="entry name" value="Palm domain of DNA polymerase"/>
    <property type="match status" value="3"/>
</dbReference>
<dbReference type="Gene3D" id="3.30.420.10">
    <property type="entry name" value="Ribonuclease H-like superfamily/Ribonuclease H"/>
    <property type="match status" value="1"/>
</dbReference>
<dbReference type="InterPro" id="IPR006172">
    <property type="entry name" value="DNA-dir_DNA_pol_B"/>
</dbReference>
<dbReference type="InterPro" id="IPR006133">
    <property type="entry name" value="DNA-dir_DNA_pol_B_exonuc"/>
</dbReference>
<dbReference type="InterPro" id="IPR006134">
    <property type="entry name" value="DNA-dir_DNA_pol_B_multi_dom"/>
</dbReference>
<dbReference type="InterPro" id="IPR043502">
    <property type="entry name" value="DNA/RNA_pol_sf"/>
</dbReference>
<dbReference type="InterPro" id="IPR042087">
    <property type="entry name" value="DNA_pol_B_thumb"/>
</dbReference>
<dbReference type="InterPro" id="IPR023211">
    <property type="entry name" value="DNA_pol_palm_dom_sf"/>
</dbReference>
<dbReference type="InterPro" id="IPR050240">
    <property type="entry name" value="DNA_pol_type-B"/>
</dbReference>
<dbReference type="InterPro" id="IPR003586">
    <property type="entry name" value="Hint_dom_C"/>
</dbReference>
<dbReference type="InterPro" id="IPR003587">
    <property type="entry name" value="Hint_dom_N"/>
</dbReference>
<dbReference type="InterPro" id="IPR036844">
    <property type="entry name" value="Hint_dom_sf"/>
</dbReference>
<dbReference type="InterPro" id="IPR027434">
    <property type="entry name" value="Homing_endonucl"/>
</dbReference>
<dbReference type="InterPro" id="IPR006142">
    <property type="entry name" value="INTEIN"/>
</dbReference>
<dbReference type="InterPro" id="IPR030934">
    <property type="entry name" value="Intein_C"/>
</dbReference>
<dbReference type="InterPro" id="IPR004042">
    <property type="entry name" value="Intein_endonuc_central"/>
</dbReference>
<dbReference type="InterPro" id="IPR006141">
    <property type="entry name" value="Intein_N"/>
</dbReference>
<dbReference type="InterPro" id="IPR004860">
    <property type="entry name" value="LAGLIDADG_dom"/>
</dbReference>
<dbReference type="InterPro" id="IPR041005">
    <property type="entry name" value="PI-TkoII_IV"/>
</dbReference>
<dbReference type="InterPro" id="IPR012337">
    <property type="entry name" value="RNaseH-like_sf"/>
</dbReference>
<dbReference type="InterPro" id="IPR036397">
    <property type="entry name" value="RNaseH_sf"/>
</dbReference>
<dbReference type="NCBIfam" id="TIGR01443">
    <property type="entry name" value="intein_Cterm"/>
    <property type="match status" value="2"/>
</dbReference>
<dbReference type="NCBIfam" id="TIGR01445">
    <property type="entry name" value="intein_Nterm"/>
    <property type="match status" value="2"/>
</dbReference>
<dbReference type="NCBIfam" id="TIGR00592">
    <property type="entry name" value="pol2"/>
    <property type="match status" value="1"/>
</dbReference>
<dbReference type="PANTHER" id="PTHR10322">
    <property type="entry name" value="DNA POLYMERASE CATALYTIC SUBUNIT"/>
    <property type="match status" value="1"/>
</dbReference>
<dbReference type="PANTHER" id="PTHR10322:SF23">
    <property type="entry name" value="DNA POLYMERASE DELTA CATALYTIC SUBUNIT"/>
    <property type="match status" value="1"/>
</dbReference>
<dbReference type="Pfam" id="PF00136">
    <property type="entry name" value="DNA_pol_B"/>
    <property type="match status" value="3"/>
</dbReference>
<dbReference type="Pfam" id="PF03104">
    <property type="entry name" value="DNA_pol_B_exo1"/>
    <property type="match status" value="1"/>
</dbReference>
<dbReference type="Pfam" id="PF14890">
    <property type="entry name" value="Intein_splicing"/>
    <property type="match status" value="2"/>
</dbReference>
<dbReference type="Pfam" id="PF14528">
    <property type="entry name" value="LAGLIDADG_3"/>
    <property type="match status" value="2"/>
</dbReference>
<dbReference type="Pfam" id="PF18714">
    <property type="entry name" value="PI-TkoII_IV"/>
    <property type="match status" value="1"/>
</dbReference>
<dbReference type="PRINTS" id="PR00379">
    <property type="entry name" value="INTEIN"/>
</dbReference>
<dbReference type="SMART" id="SM00305">
    <property type="entry name" value="HintC"/>
    <property type="match status" value="2"/>
</dbReference>
<dbReference type="SMART" id="SM00306">
    <property type="entry name" value="HintN"/>
    <property type="match status" value="2"/>
</dbReference>
<dbReference type="SMART" id="SM00486">
    <property type="entry name" value="POLBc"/>
    <property type="match status" value="1"/>
</dbReference>
<dbReference type="SUPFAM" id="SSF56672">
    <property type="entry name" value="DNA/RNA polymerases"/>
    <property type="match status" value="2"/>
</dbReference>
<dbReference type="SUPFAM" id="SSF51294">
    <property type="entry name" value="Hedgehog/intein (Hint) domain"/>
    <property type="match status" value="2"/>
</dbReference>
<dbReference type="SUPFAM" id="SSF55608">
    <property type="entry name" value="Homing endonucleases"/>
    <property type="match status" value="2"/>
</dbReference>
<dbReference type="SUPFAM" id="SSF53098">
    <property type="entry name" value="Ribonuclease H-like"/>
    <property type="match status" value="1"/>
</dbReference>
<dbReference type="PROSITE" id="PS50818">
    <property type="entry name" value="INTEIN_C_TER"/>
    <property type="match status" value="2"/>
</dbReference>
<dbReference type="PROSITE" id="PS50819">
    <property type="entry name" value="INTEIN_ENDONUCLEASE"/>
    <property type="match status" value="2"/>
</dbReference>
<dbReference type="PROSITE" id="PS50817">
    <property type="entry name" value="INTEIN_N_TER"/>
    <property type="match status" value="2"/>
</dbReference>
<comment type="function">
    <text evidence="1">In addition to polymerase activity, this DNA polymerase exhibits 3' to 5' exonuclease activity.</text>
</comment>
<comment type="function">
    <text>PI-ThyI and PI-ThyII are endonucleases. PI-ThyI cleaves the inteinless sequence of the Thy DNA pol gene. It requires a 21-bp minimal recognition sequence.</text>
</comment>
<comment type="catalytic activity">
    <reaction>
        <text>DNA(n) + a 2'-deoxyribonucleoside 5'-triphosphate = DNA(n+1) + diphosphate</text>
        <dbReference type="Rhea" id="RHEA:22508"/>
        <dbReference type="Rhea" id="RHEA-COMP:17339"/>
        <dbReference type="Rhea" id="RHEA-COMP:17340"/>
        <dbReference type="ChEBI" id="CHEBI:33019"/>
        <dbReference type="ChEBI" id="CHEBI:61560"/>
        <dbReference type="ChEBI" id="CHEBI:173112"/>
        <dbReference type="EC" id="2.7.7.7"/>
    </reaction>
</comment>
<comment type="PTM">
    <text evidence="4">This protein undergoes a protein self splicing that involves a post-translational excision of the intervening region (intein) followed by peptide ligation.</text>
</comment>
<comment type="similarity">
    <text evidence="4">Belongs to the DNA polymerase type-B family.</text>
</comment>
<reference key="1">
    <citation type="submission" date="1999-10" db="EMBL/GenBank/DDBJ databases">
        <title>Thermococcales taxonomy and phylogeny based on the comparative use of 16S rDNA, 16S-23S rDNA intergenic spacer and family B DNA polymerase genes.</title>
        <authorList>
            <person name="Querellou J.J.E."/>
            <person name="Cambon M.A."/>
            <person name="Lesongeur F.O."/>
            <person name="Barbier G."/>
        </authorList>
    </citation>
    <scope>NUCLEOTIDE SEQUENCE [GENOMIC DNA]</scope>
</reference>
<reference key="2">
    <citation type="journal article" date="2000" name="Nucleic Acids Res.">
        <title>The Thy pol-2 intein of Thermococcus hydrothermalis is an isoschizomer of PI-TliI and PI-TfuII endonucleases.</title>
        <authorList>
            <person name="Saves I."/>
            <person name="Eleaume H."/>
            <person name="Dietrich J."/>
            <person name="Masson J.-M."/>
        </authorList>
    </citation>
    <scope>CHARACTERIZATION OF PI-THYI</scope>
</reference>
<gene>
    <name type="primary">pol</name>
</gene>
<name>DPOL_THEHY</name>
<sequence>FEPYIYALLKDDSAIEEVKKITAGRHGRVVKVKRAEKVKKKFLGRPIEVWKLYFTHPQDVPAIRDEIRRHSAVVDIYEYDIPFAKRYLIDKGLIPMEGDEELKMMSFDIETLYHEGEEFGTGPILMISYADEGEARVITWKKIDLPYVEVVSTEKEMIKRFLKVVKEKDPDVLITYNGDNFDFAYLKKRCEKIGIKFTLRRDGSEPKIQRMGDRFAVEVKGRIHFDLYPVIRRTINLPTYTLEAVYEAVFGTPKEKVYPEEITTAWETGEGLERVARYSMEDAKVTYELGREFFPMEAQLSRLIGQSLWDVSRSSTGNLVEWFLLRKAYERNEIAPNKPDERELARRRGGYAGGYVKEPERGLWDNIVYLDFMSLYPSIIITHNVSPDTFNREGCKEYDTAPQVGHKFCKDVQGFIPSLLGALLDERQKIKKRMKASIDPLEKKLLDYRQKAIKILANSLLPEEWIPLVENGKVRLHRIGEFVDKLMETDSELVKRNGDTEVLEVRGIRALSFDRKSKKARVMPVKAVIRHRYSGDVYEIVLGSGRRITVTEGHSLFAYGDGELREVTGGEIKAGDLLAVPRRVNLPEKKERLNLVELLRRLPEEETGDIILTIPVKGRKNFFKGMLRTLRWISGEEKRPRTARRYLEHLEGLGYVRLKKIGYEVTDREGLERYRKLYERLVEAVRYNGNKREYLVEFNAVRDVIALMPEEELRDWLVGTRNGFRMRPFVEIEEDFAKLLGYYVSEGNARKWRNQKNGWSYTVKLYNENQRVLDDMESLAERFFGRVKRGKNYIEIPRKMAYIIFENLCGTLAENKRVPEAIFTSPESVRWAFIEGYFIGDGDVHPSKRVRLSTKSELLVNGLVLLLNSLGVSAIKIRHDSGVYRVYVNEELPFTDYRKKKNAYYSHVIPKEILEETFGKVFQRSVSYEKFRELVKSEKLDGEKAKRIEWLLNGDVVLDKVLEVKKRPYEGYVYDLSVEEDENFLAGFGLLYAHNSYYGYYGYARARWYCKECAESVTAWGRDYIETTIHEIEERFGFKVLYADSVTGETEIIIKRNGKVEFVAIEELFQRVDYRIGEKEYCVLEGVEALTLDNRGRLVWKSVPYVMRHRTNKRIYRVWFTNSWYLDVTEDHSLIGYMNTSKVKPGKPLKERLVEVKPGELGESVKSLITPNRAIAHGIRVNPIAVKLWELIGLLVGDGNWGGQSNWAKYNVGLSLGLDKEEIEEKILKPLKNTGIISNYYDKSKKGDVSILSKWLARFMVRYFKDESGSKRIPEFMFNLPREYIEAFLRGLFSADGTVSLRKGVPEVRLTSVNPELSSSVRKLLWLVGVSNSMFVETNPNRYLGKESGTHSVHVRIKDKHRFAERIGFLLDRKATKLSENLGGHTSKKRAYKYDFDLVYPKKVEEIAYDGYVYDIEVEGTHRFFANGILVHNTDGFFATIPGADAETVKKKAKEFLKYINAKLPGLLELEYEGFYVRGFFVTKKKYAVIDEEGKITTRGLEIVRRDWSEIAKETQARVLEAILRHGDVEEAVRIVKDVTEKLSKYEVPPEKLVIHEQITRELKDYKATGPHVAIAKRLAARGIKIRPGTVISYIVLKGSGRIGDRAIPFDEFDPTKHRYDAEYYIENQVLPAVERILKAFGYKKEELRYQKTRQVGLGAWLKLKGKK</sequence>
<feature type="chain" id="PRO_0000007333" description="DNA polymerase, 1st part">
    <location>
        <begin position="1"/>
        <end position="458"/>
    </location>
</feature>
<feature type="chain" id="PRO_0000007334" description="Endonuclease PI-ThyI" evidence="2">
    <location>
        <begin position="459"/>
        <end position="995"/>
    </location>
</feature>
<feature type="chain" id="PRO_0000007335" description="DNA polymerase, 2nd part">
    <location>
        <begin position="996"/>
        <end position="1044"/>
    </location>
</feature>
<feature type="chain" id="PRO_0000007336" description="Endonuclease PI-ThyII" evidence="2">
    <location>
        <begin position="1045"/>
        <end position="1433"/>
    </location>
</feature>
<feature type="chain" id="PRO_0000007337" description="DNA polymerase, 3rd part">
    <location>
        <begin position="1434"/>
        <end position="1668"/>
    </location>
</feature>
<feature type="domain" description="DOD-type homing endonuclease 1" evidence="3">
    <location>
        <begin position="739"/>
        <end position="872"/>
    </location>
</feature>
<feature type="domain" description="DOD-type homing endonuclease 2" evidence="3">
    <location>
        <begin position="1191"/>
        <end position="1330"/>
    </location>
</feature>
<feature type="non-terminal residue">
    <location>
        <position position="1"/>
    </location>
</feature>
<accession>Q9HH05</accession>
<proteinExistence type="evidence at protein level"/>